<gene>
    <name evidence="1" type="primary">pyrK</name>
    <name type="ordered locus">FN0423</name>
</gene>
<accession>P58884</accession>
<comment type="function">
    <text evidence="1">Responsible for channeling the electrons from the oxidation of dihydroorotate from the FMN redox center in the PyrD type B subunit to the ultimate electron acceptor NAD(+).</text>
</comment>
<comment type="cofactor">
    <cofactor evidence="1">
        <name>[2Fe-2S] cluster</name>
        <dbReference type="ChEBI" id="CHEBI:190135"/>
    </cofactor>
    <text evidence="1">Binds 1 [2Fe-2S] cluster per subunit.</text>
</comment>
<comment type="cofactor">
    <cofactor evidence="1">
        <name>FAD</name>
        <dbReference type="ChEBI" id="CHEBI:57692"/>
    </cofactor>
    <text evidence="1">Binds 1 FAD per subunit.</text>
</comment>
<comment type="pathway">
    <text evidence="1">Pyrimidine metabolism; UMP biosynthesis via de novo pathway; orotate from (S)-dihydroorotate (NAD(+) route): step 1/1.</text>
</comment>
<comment type="subunit">
    <text evidence="1">Heterotetramer of 2 PyrK and 2 PyrD type B subunits.</text>
</comment>
<comment type="similarity">
    <text evidence="1">Belongs to the PyrK family.</text>
</comment>
<reference key="1">
    <citation type="journal article" date="2002" name="J. Bacteriol.">
        <title>Genome sequence and analysis of the oral bacterium Fusobacterium nucleatum strain ATCC 25586.</title>
        <authorList>
            <person name="Kapatral V."/>
            <person name="Anderson I."/>
            <person name="Ivanova N."/>
            <person name="Reznik G."/>
            <person name="Los T."/>
            <person name="Lykidis A."/>
            <person name="Bhattacharyya A."/>
            <person name="Bartman A."/>
            <person name="Gardner W."/>
            <person name="Grechkin G."/>
            <person name="Zhu L."/>
            <person name="Vasieva O."/>
            <person name="Chu L."/>
            <person name="Kogan Y."/>
            <person name="Chaga O."/>
            <person name="Goltsman E."/>
            <person name="Bernal A."/>
            <person name="Larsen N."/>
            <person name="D'Souza M."/>
            <person name="Walunas T."/>
            <person name="Pusch G."/>
            <person name="Haselkorn R."/>
            <person name="Fonstein M."/>
            <person name="Kyrpides N.C."/>
            <person name="Overbeek R."/>
        </authorList>
    </citation>
    <scope>NUCLEOTIDE SEQUENCE [LARGE SCALE GENOMIC DNA]</scope>
    <source>
        <strain>ATCC 25586 / DSM 15643 / BCRC 10681 / CIP 101130 / JCM 8532 / KCTC 2640 / LMG 13131 / VPI 4355</strain>
    </source>
</reference>
<dbReference type="EMBL" id="AE009951">
    <property type="protein sequence ID" value="AAL94626.1"/>
    <property type="molecule type" value="Genomic_DNA"/>
</dbReference>
<dbReference type="RefSeq" id="NP_603327.1">
    <property type="nucleotide sequence ID" value="NC_003454.1"/>
</dbReference>
<dbReference type="RefSeq" id="WP_011016380.1">
    <property type="nucleotide sequence ID" value="NZ_OZ209243.1"/>
</dbReference>
<dbReference type="SMR" id="P58884"/>
<dbReference type="FunCoup" id="P58884">
    <property type="interactions" value="232"/>
</dbReference>
<dbReference type="STRING" id="190304.FN0423"/>
<dbReference type="PaxDb" id="190304-FN0423"/>
<dbReference type="EnsemblBacteria" id="AAL94626">
    <property type="protein sequence ID" value="AAL94626"/>
    <property type="gene ID" value="FN0423"/>
</dbReference>
<dbReference type="KEGG" id="fnu:FN0423"/>
<dbReference type="PATRIC" id="fig|190304.8.peg.1000"/>
<dbReference type="eggNOG" id="COG0543">
    <property type="taxonomic scope" value="Bacteria"/>
</dbReference>
<dbReference type="HOGENOM" id="CLU_003827_1_2_0"/>
<dbReference type="InParanoid" id="P58884"/>
<dbReference type="BioCyc" id="FNUC190304:G1FZS-1017-MONOMER"/>
<dbReference type="UniPathway" id="UPA00070">
    <property type="reaction ID" value="UER00945"/>
</dbReference>
<dbReference type="Proteomes" id="UP000002521">
    <property type="component" value="Chromosome"/>
</dbReference>
<dbReference type="GO" id="GO:0051537">
    <property type="term" value="F:2 iron, 2 sulfur cluster binding"/>
    <property type="evidence" value="ECO:0007669"/>
    <property type="project" value="UniProtKB-KW"/>
</dbReference>
<dbReference type="GO" id="GO:0009055">
    <property type="term" value="F:electron transfer activity"/>
    <property type="evidence" value="ECO:0007669"/>
    <property type="project" value="UniProtKB-UniRule"/>
</dbReference>
<dbReference type="GO" id="GO:0050660">
    <property type="term" value="F:flavin adenine dinucleotide binding"/>
    <property type="evidence" value="ECO:0007669"/>
    <property type="project" value="InterPro"/>
</dbReference>
<dbReference type="GO" id="GO:0046872">
    <property type="term" value="F:metal ion binding"/>
    <property type="evidence" value="ECO:0007669"/>
    <property type="project" value="UniProtKB-KW"/>
</dbReference>
<dbReference type="GO" id="GO:0016491">
    <property type="term" value="F:oxidoreductase activity"/>
    <property type="evidence" value="ECO:0007669"/>
    <property type="project" value="InterPro"/>
</dbReference>
<dbReference type="GO" id="GO:0044205">
    <property type="term" value="P:'de novo' UMP biosynthetic process"/>
    <property type="evidence" value="ECO:0007669"/>
    <property type="project" value="UniProtKB-UniRule"/>
</dbReference>
<dbReference type="CDD" id="cd06218">
    <property type="entry name" value="DHOD_e_trans"/>
    <property type="match status" value="1"/>
</dbReference>
<dbReference type="Gene3D" id="2.10.240.10">
    <property type="entry name" value="Dihydroorotate dehydrogenase, electron transfer subunit"/>
    <property type="match status" value="1"/>
</dbReference>
<dbReference type="Gene3D" id="3.40.50.80">
    <property type="entry name" value="Nucleotide-binding domain of ferredoxin-NADP reductase (FNR) module"/>
    <property type="match status" value="1"/>
</dbReference>
<dbReference type="Gene3D" id="2.40.30.10">
    <property type="entry name" value="Translation factors"/>
    <property type="match status" value="1"/>
</dbReference>
<dbReference type="HAMAP" id="MF_01211">
    <property type="entry name" value="DHODB_Fe_S_bind"/>
    <property type="match status" value="1"/>
</dbReference>
<dbReference type="InterPro" id="IPR012165">
    <property type="entry name" value="Cyt_c3_hydrogenase_gsu"/>
</dbReference>
<dbReference type="InterPro" id="IPR037117">
    <property type="entry name" value="Dihydroorotate_DH_ele_sf"/>
</dbReference>
<dbReference type="InterPro" id="IPR019480">
    <property type="entry name" value="Dihydroorotate_DH_Fe-S-bd"/>
</dbReference>
<dbReference type="InterPro" id="IPR023455">
    <property type="entry name" value="Dihydroorotate_DHASE_ETsu"/>
</dbReference>
<dbReference type="InterPro" id="IPR017927">
    <property type="entry name" value="FAD-bd_FR_type"/>
</dbReference>
<dbReference type="InterPro" id="IPR039261">
    <property type="entry name" value="FNR_nucleotide-bd"/>
</dbReference>
<dbReference type="InterPro" id="IPR001433">
    <property type="entry name" value="OxRdtase_FAD/NAD-bd"/>
</dbReference>
<dbReference type="InterPro" id="IPR050353">
    <property type="entry name" value="PyrK_electron_transfer"/>
</dbReference>
<dbReference type="InterPro" id="IPR017938">
    <property type="entry name" value="Riboflavin_synthase-like_b-brl"/>
</dbReference>
<dbReference type="NCBIfam" id="NF000799">
    <property type="entry name" value="PRK00054.1-4"/>
    <property type="match status" value="1"/>
</dbReference>
<dbReference type="PANTHER" id="PTHR43513">
    <property type="entry name" value="DIHYDROOROTATE DEHYDROGENASE B (NAD(+)), ELECTRON TRANSFER SUBUNIT"/>
    <property type="match status" value="1"/>
</dbReference>
<dbReference type="PANTHER" id="PTHR43513:SF3">
    <property type="entry name" value="DIHYDROOROTATE DEHYDROGENASE B (NAD(+)), ELECTRON TRANSFER SUBUNIT-RELATED"/>
    <property type="match status" value="1"/>
</dbReference>
<dbReference type="Pfam" id="PF10418">
    <property type="entry name" value="DHODB_Fe-S_bind"/>
    <property type="match status" value="1"/>
</dbReference>
<dbReference type="Pfam" id="PF00175">
    <property type="entry name" value="NAD_binding_1"/>
    <property type="match status" value="1"/>
</dbReference>
<dbReference type="PIRSF" id="PIRSF006816">
    <property type="entry name" value="Cyc3_hyd_g"/>
    <property type="match status" value="1"/>
</dbReference>
<dbReference type="SUPFAM" id="SSF52343">
    <property type="entry name" value="Ferredoxin reductase-like, C-terminal NADP-linked domain"/>
    <property type="match status" value="1"/>
</dbReference>
<dbReference type="SUPFAM" id="SSF63380">
    <property type="entry name" value="Riboflavin synthase domain-like"/>
    <property type="match status" value="1"/>
</dbReference>
<dbReference type="PROSITE" id="PS51384">
    <property type="entry name" value="FAD_FR"/>
    <property type="match status" value="1"/>
</dbReference>
<protein>
    <recommendedName>
        <fullName evidence="1">Dihydroorotate dehydrogenase B (NAD(+)), electron transfer subunit</fullName>
    </recommendedName>
    <alternativeName>
        <fullName evidence="1">Dihydroorotate oxidase B, electron transfer subunit</fullName>
    </alternativeName>
</protein>
<proteinExistence type="inferred from homology"/>
<organism>
    <name type="scientific">Fusobacterium nucleatum subsp. nucleatum (strain ATCC 25586 / DSM 15643 / BCRC 10681 / CIP 101130 / JCM 8532 / KCTC 2640 / LMG 13131 / VPI 4355)</name>
    <dbReference type="NCBI Taxonomy" id="190304"/>
    <lineage>
        <taxon>Bacteria</taxon>
        <taxon>Fusobacteriati</taxon>
        <taxon>Fusobacteriota</taxon>
        <taxon>Fusobacteriia</taxon>
        <taxon>Fusobacteriales</taxon>
        <taxon>Fusobacteriaceae</taxon>
        <taxon>Fusobacterium</taxon>
    </lineage>
</organism>
<feature type="chain" id="PRO_0000148361" description="Dihydroorotate dehydrogenase B (NAD(+)), electron transfer subunit">
    <location>
        <begin position="1"/>
        <end position="259"/>
    </location>
</feature>
<feature type="domain" description="FAD-binding FR-type" evidence="1">
    <location>
        <begin position="1"/>
        <end position="101"/>
    </location>
</feature>
<feature type="binding site" evidence="1">
    <location>
        <begin position="52"/>
        <end position="55"/>
    </location>
    <ligand>
        <name>FAD</name>
        <dbReference type="ChEBI" id="CHEBI:57692"/>
    </ligand>
</feature>
<feature type="binding site" evidence="1">
    <location>
        <begin position="69"/>
        <end position="71"/>
    </location>
    <ligand>
        <name>FAD</name>
        <dbReference type="ChEBI" id="CHEBI:57692"/>
    </ligand>
</feature>
<feature type="binding site" evidence="1">
    <location>
        <begin position="76"/>
        <end position="77"/>
    </location>
    <ligand>
        <name>FAD</name>
        <dbReference type="ChEBI" id="CHEBI:57692"/>
    </ligand>
</feature>
<feature type="binding site" evidence="1">
    <location>
        <position position="223"/>
    </location>
    <ligand>
        <name>[2Fe-2S] cluster</name>
        <dbReference type="ChEBI" id="CHEBI:190135"/>
    </ligand>
</feature>
<feature type="binding site" evidence="1">
    <location>
        <position position="228"/>
    </location>
    <ligand>
        <name>[2Fe-2S] cluster</name>
        <dbReference type="ChEBI" id="CHEBI:190135"/>
    </ligand>
</feature>
<feature type="binding site" evidence="1">
    <location>
        <position position="231"/>
    </location>
    <ligand>
        <name>[2Fe-2S] cluster</name>
        <dbReference type="ChEBI" id="CHEBI:190135"/>
    </ligand>
</feature>
<feature type="binding site" evidence="1">
    <location>
        <position position="245"/>
    </location>
    <ligand>
        <name>[2Fe-2S] cluster</name>
        <dbReference type="ChEBI" id="CHEBI:190135"/>
    </ligand>
</feature>
<sequence>MKIEDCTVEENVQIAKDTYKMKIKGNFVKECRTPGQFVNIRIGDGREHVLRRPISISEIDRGENLVTIIYRIVGEGTKFMANIKKGNEIDVMGPLGRGYDVLSLTKEQTALLVGGGIGVPPLYELAKQFNKRGIKTIIILGFNSKDEVFYEDEFKKFGETYVSTIDGSVGTKGFVTDVIKKLQAENNLVFDKYYSCGPVPMLKALVNAVGEDGYISLENRMACGIGACYACVCKKKKKDDYTRVCYDGPVYLASDVEIE</sequence>
<evidence type="ECO:0000255" key="1">
    <source>
        <dbReference type="HAMAP-Rule" id="MF_01211"/>
    </source>
</evidence>
<name>PYRK_FUSNN</name>
<keyword id="KW-0001">2Fe-2S</keyword>
<keyword id="KW-0249">Electron transport</keyword>
<keyword id="KW-0274">FAD</keyword>
<keyword id="KW-0285">Flavoprotein</keyword>
<keyword id="KW-0408">Iron</keyword>
<keyword id="KW-0411">Iron-sulfur</keyword>
<keyword id="KW-0479">Metal-binding</keyword>
<keyword id="KW-0665">Pyrimidine biosynthesis</keyword>
<keyword id="KW-1185">Reference proteome</keyword>
<keyword id="KW-0813">Transport</keyword>